<feature type="signal peptide" evidence="1">
    <location>
        <begin position="1"/>
        <end position="29"/>
    </location>
</feature>
<feature type="chain" id="PRO_0000292429" description="Out at first protein homolog">
    <location>
        <begin position="30"/>
        <end position="282"/>
    </location>
</feature>
<accession>Q6AYE5</accession>
<gene>
    <name type="primary">Oaf</name>
</gene>
<organism>
    <name type="scientific">Rattus norvegicus</name>
    <name type="common">Rat</name>
    <dbReference type="NCBI Taxonomy" id="10116"/>
    <lineage>
        <taxon>Eukaryota</taxon>
        <taxon>Metazoa</taxon>
        <taxon>Chordata</taxon>
        <taxon>Craniata</taxon>
        <taxon>Vertebrata</taxon>
        <taxon>Euteleostomi</taxon>
        <taxon>Mammalia</taxon>
        <taxon>Eutheria</taxon>
        <taxon>Euarchontoglires</taxon>
        <taxon>Glires</taxon>
        <taxon>Rodentia</taxon>
        <taxon>Myomorpha</taxon>
        <taxon>Muroidea</taxon>
        <taxon>Muridae</taxon>
        <taxon>Murinae</taxon>
        <taxon>Rattus</taxon>
    </lineage>
</organism>
<protein>
    <recommendedName>
        <fullName>Out at first protein homolog</fullName>
    </recommendedName>
</protein>
<comment type="similarity">
    <text evidence="2">Belongs to the OAF family.</text>
</comment>
<sequence length="282" mass="31776">MRPPGRRDVPSARPALPLLLLLLSPLLLGAPHGVGASSGAPAELRVRVRLPDGQVTEESLQADSDADSISLDLRKPDGTLISFIADFKKDVKIFRALILGELEKGQSQFQALCFVTRLYHNEIIPSEAMAKLRQKNPRAVRQAEEVRGLEQLHMDIAVNFSQGGLLSPHLRNVCAEATDAIYTRQEDAQFWTERGVDSSVFEPLLKELEQVELPRCGQVGDRGKPCICHYSLSLAWYPCMLKYCHSRDRPAPYKCGIRSCRKSYRFDFYVPQRQLCLWDEDP</sequence>
<proteinExistence type="evidence at transcript level"/>
<dbReference type="EMBL" id="BC079082">
    <property type="protein sequence ID" value="AAH79082.1"/>
    <property type="molecule type" value="mRNA"/>
</dbReference>
<dbReference type="RefSeq" id="NP_001014112.1">
    <property type="nucleotide sequence ID" value="NM_001014090.1"/>
</dbReference>
<dbReference type="FunCoup" id="Q6AYE5">
    <property type="interactions" value="629"/>
</dbReference>
<dbReference type="STRING" id="10116.ENSRNOP00000012825"/>
<dbReference type="PhosphoSitePlus" id="Q6AYE5"/>
<dbReference type="PaxDb" id="10116-ENSRNOP00000012825"/>
<dbReference type="Ensembl" id="ENSRNOT00000012826.5">
    <property type="protein sequence ID" value="ENSRNOP00000012825.4"/>
    <property type="gene ID" value="ENSRNOG00000009243.5"/>
</dbReference>
<dbReference type="GeneID" id="315594"/>
<dbReference type="KEGG" id="rno:315594"/>
<dbReference type="UCSC" id="RGD:1305890">
    <property type="organism name" value="rat"/>
</dbReference>
<dbReference type="AGR" id="RGD:1305890"/>
<dbReference type="CTD" id="220323"/>
<dbReference type="RGD" id="1305890">
    <property type="gene designation" value="Oaf"/>
</dbReference>
<dbReference type="eggNOG" id="ENOG502QWDA">
    <property type="taxonomic scope" value="Eukaryota"/>
</dbReference>
<dbReference type="GeneTree" id="ENSGT00390000012008"/>
<dbReference type="HOGENOM" id="CLU_043995_1_0_1"/>
<dbReference type="InParanoid" id="Q6AYE5"/>
<dbReference type="OMA" id="CHYGLSL"/>
<dbReference type="OrthoDB" id="5947176at2759"/>
<dbReference type="PhylomeDB" id="Q6AYE5"/>
<dbReference type="TreeFam" id="TF323953"/>
<dbReference type="PRO" id="PR:Q6AYE5"/>
<dbReference type="Proteomes" id="UP000002494">
    <property type="component" value="Chromosome 8"/>
</dbReference>
<dbReference type="Bgee" id="ENSRNOG00000009243">
    <property type="expression patterns" value="Expressed in liver and 20 other cell types or tissues"/>
</dbReference>
<dbReference type="InterPro" id="IPR026315">
    <property type="entry name" value="Oaf"/>
</dbReference>
<dbReference type="InterPro" id="IPR053897">
    <property type="entry name" value="Oaf_C"/>
</dbReference>
<dbReference type="InterPro" id="IPR053894">
    <property type="entry name" value="OAF_N"/>
</dbReference>
<dbReference type="PANTHER" id="PTHR13423">
    <property type="entry name" value="OUT AT FIRST"/>
    <property type="match status" value="1"/>
</dbReference>
<dbReference type="PANTHER" id="PTHR13423:SF2">
    <property type="entry name" value="OUT AT FIRST PROTEIN HOMOLOG"/>
    <property type="match status" value="1"/>
</dbReference>
<dbReference type="Pfam" id="PF22873">
    <property type="entry name" value="OAF_C"/>
    <property type="match status" value="1"/>
</dbReference>
<dbReference type="Pfam" id="PF14941">
    <property type="entry name" value="OAF_N"/>
    <property type="match status" value="1"/>
</dbReference>
<reference key="1">
    <citation type="journal article" date="2004" name="Genome Res.">
        <title>The status, quality, and expansion of the NIH full-length cDNA project: the Mammalian Gene Collection (MGC).</title>
        <authorList>
            <consortium name="The MGC Project Team"/>
        </authorList>
    </citation>
    <scope>NUCLEOTIDE SEQUENCE [LARGE SCALE MRNA]</scope>
    <source>
        <tissue>Lung</tissue>
    </source>
</reference>
<keyword id="KW-1185">Reference proteome</keyword>
<keyword id="KW-0732">Signal</keyword>
<name>OAF_RAT</name>
<evidence type="ECO:0000255" key="1"/>
<evidence type="ECO:0000305" key="2"/>